<organism>
    <name type="scientific">Drosophila melanogaster</name>
    <name type="common">Fruit fly</name>
    <dbReference type="NCBI Taxonomy" id="7227"/>
    <lineage>
        <taxon>Eukaryota</taxon>
        <taxon>Metazoa</taxon>
        <taxon>Ecdysozoa</taxon>
        <taxon>Arthropoda</taxon>
        <taxon>Hexapoda</taxon>
        <taxon>Insecta</taxon>
        <taxon>Pterygota</taxon>
        <taxon>Neoptera</taxon>
        <taxon>Endopterygota</taxon>
        <taxon>Diptera</taxon>
        <taxon>Brachycera</taxon>
        <taxon>Muscomorpha</taxon>
        <taxon>Ephydroidea</taxon>
        <taxon>Drosophilidae</taxon>
        <taxon>Drosophila</taxon>
        <taxon>Sophophora</taxon>
    </lineage>
</organism>
<sequence length="227" mass="26011">MALSIFKDLPAEHPRHLIPSLCRQFYHLGWVTGTGGGMSIKYNDEIYIAPSGVQKERMQPEDLFVQDITGKDLQLPPEIKGLKKSQCTPLFMLAYQHRQAGAVIHTHSQHAVMATLLWPGKTFRCTHLEMIKGVYDEADKRYLRYDEELVVPIIENTPFERDLADSMYAAMMEYPGCSAILVRRHGVYVWGQNWEKAKTMSECYDYLFSIAVEMKKAGIDPEKFESS</sequence>
<protein>
    <recommendedName>
        <fullName evidence="1">Probable methylthioribulose-1-phosphate dehydratase</fullName>
        <shortName evidence="1">MTRu-1-P dehydratase</shortName>
        <ecNumber evidence="1">4.2.1.109</ecNumber>
    </recommendedName>
</protein>
<evidence type="ECO:0000255" key="1">
    <source>
        <dbReference type="HAMAP-Rule" id="MF_03116"/>
    </source>
</evidence>
<dbReference type="EC" id="4.2.1.109" evidence="1"/>
<dbReference type="EMBL" id="AE014298">
    <property type="protein sequence ID" value="AAF48310.1"/>
    <property type="molecule type" value="Genomic_DNA"/>
</dbReference>
<dbReference type="EMBL" id="AY071553">
    <property type="protein sequence ID" value="AAL49175.1"/>
    <property type="molecule type" value="mRNA"/>
</dbReference>
<dbReference type="RefSeq" id="NP_001259530.1">
    <property type="nucleotide sequence ID" value="NM_001272601.1"/>
</dbReference>
<dbReference type="RefSeq" id="NP_572916.1">
    <property type="nucleotide sequence ID" value="NM_132688.4"/>
</dbReference>
<dbReference type="SMR" id="Q9VY93"/>
<dbReference type="BioGRID" id="58708">
    <property type="interactions" value="5"/>
</dbReference>
<dbReference type="FunCoup" id="Q9VY93">
    <property type="interactions" value="944"/>
</dbReference>
<dbReference type="IntAct" id="Q9VY93">
    <property type="interactions" value="4"/>
</dbReference>
<dbReference type="STRING" id="7227.FBpp0304097"/>
<dbReference type="PaxDb" id="7227-FBpp0304097"/>
<dbReference type="DNASU" id="32334"/>
<dbReference type="EnsemblMetazoa" id="FBtr0073818">
    <property type="protein sequence ID" value="FBpp0073649"/>
    <property type="gene ID" value="FBgn0030518"/>
</dbReference>
<dbReference type="EnsemblMetazoa" id="FBtr0331708">
    <property type="protein sequence ID" value="FBpp0304097"/>
    <property type="gene ID" value="FBgn0030518"/>
</dbReference>
<dbReference type="GeneID" id="32334"/>
<dbReference type="KEGG" id="dme:Dmel_CG11134"/>
<dbReference type="UCSC" id="CG11134-RA">
    <property type="organism name" value="d. melanogaster"/>
</dbReference>
<dbReference type="AGR" id="FB:FBgn0030518"/>
<dbReference type="FlyBase" id="FBgn0030518">
    <property type="gene designation" value="CG11134"/>
</dbReference>
<dbReference type="VEuPathDB" id="VectorBase:FBgn0030518"/>
<dbReference type="eggNOG" id="KOG2631">
    <property type="taxonomic scope" value="Eukaryota"/>
</dbReference>
<dbReference type="GeneTree" id="ENSGT00390000001680"/>
<dbReference type="HOGENOM" id="CLU_006033_4_0_1"/>
<dbReference type="InParanoid" id="Q9VY93"/>
<dbReference type="OMA" id="WFPGTSG"/>
<dbReference type="OrthoDB" id="191080at2759"/>
<dbReference type="PhylomeDB" id="Q9VY93"/>
<dbReference type="Reactome" id="R-DME-111458">
    <property type="pathway name" value="Formation of apoptosome"/>
</dbReference>
<dbReference type="Reactome" id="R-DME-9627069">
    <property type="pathway name" value="Regulation of the apoptosome activity"/>
</dbReference>
<dbReference type="UniPathway" id="UPA00904">
    <property type="reaction ID" value="UER00875"/>
</dbReference>
<dbReference type="BioGRID-ORCS" id="32334">
    <property type="hits" value="0 hits in 1 CRISPR screen"/>
</dbReference>
<dbReference type="GenomeRNAi" id="32334"/>
<dbReference type="PRO" id="PR:Q9VY93"/>
<dbReference type="Proteomes" id="UP000000803">
    <property type="component" value="Chromosome X"/>
</dbReference>
<dbReference type="Bgee" id="FBgn0030518">
    <property type="expression patterns" value="Expressed in adult Malpighian tubule (Drosophila) and 104 other cell types or tissues"/>
</dbReference>
<dbReference type="ExpressionAtlas" id="Q9VY93">
    <property type="expression patterns" value="baseline and differential"/>
</dbReference>
<dbReference type="GO" id="GO:0005737">
    <property type="term" value="C:cytoplasm"/>
    <property type="evidence" value="ECO:0000318"/>
    <property type="project" value="GO_Central"/>
</dbReference>
<dbReference type="GO" id="GO:0046570">
    <property type="term" value="F:methylthioribulose 1-phosphate dehydratase activity"/>
    <property type="evidence" value="ECO:0000250"/>
    <property type="project" value="UniProtKB"/>
</dbReference>
<dbReference type="GO" id="GO:0008270">
    <property type="term" value="F:zinc ion binding"/>
    <property type="evidence" value="ECO:0000250"/>
    <property type="project" value="UniProtKB"/>
</dbReference>
<dbReference type="GO" id="GO:0019509">
    <property type="term" value="P:L-methionine salvage from methylthioadenosine"/>
    <property type="evidence" value="ECO:0000318"/>
    <property type="project" value="GO_Central"/>
</dbReference>
<dbReference type="FunFam" id="3.40.225.10:FF:000003">
    <property type="entry name" value="Methylthioribulose-1-phosphate dehydratase"/>
    <property type="match status" value="1"/>
</dbReference>
<dbReference type="Gene3D" id="3.40.225.10">
    <property type="entry name" value="Class II aldolase/adducin N-terminal domain"/>
    <property type="match status" value="1"/>
</dbReference>
<dbReference type="HAMAP" id="MF_03116">
    <property type="entry name" value="Salvage_MtnB_euk"/>
    <property type="match status" value="1"/>
</dbReference>
<dbReference type="InterPro" id="IPR001303">
    <property type="entry name" value="Aldolase_II/adducin_N"/>
</dbReference>
<dbReference type="InterPro" id="IPR036409">
    <property type="entry name" value="Aldolase_II/adducin_N_sf"/>
</dbReference>
<dbReference type="InterPro" id="IPR017714">
    <property type="entry name" value="MethylthioRu-1-P_deHdtase_MtnB"/>
</dbReference>
<dbReference type="InterPro" id="IPR027514">
    <property type="entry name" value="Salvage_MtnB_euk"/>
</dbReference>
<dbReference type="NCBIfam" id="TIGR03328">
    <property type="entry name" value="salvage_mtnB"/>
    <property type="match status" value="1"/>
</dbReference>
<dbReference type="PANTHER" id="PTHR10640">
    <property type="entry name" value="METHYLTHIORIBULOSE-1-PHOSPHATE DEHYDRATASE"/>
    <property type="match status" value="1"/>
</dbReference>
<dbReference type="PANTHER" id="PTHR10640:SF7">
    <property type="entry name" value="METHYLTHIORIBULOSE-1-PHOSPHATE DEHYDRATASE"/>
    <property type="match status" value="1"/>
</dbReference>
<dbReference type="Pfam" id="PF00596">
    <property type="entry name" value="Aldolase_II"/>
    <property type="match status" value="1"/>
</dbReference>
<dbReference type="SMART" id="SM01007">
    <property type="entry name" value="Aldolase_II"/>
    <property type="match status" value="1"/>
</dbReference>
<dbReference type="SUPFAM" id="SSF53639">
    <property type="entry name" value="AraD/HMP-PK domain-like"/>
    <property type="match status" value="1"/>
</dbReference>
<name>MTNB_DROME</name>
<keyword id="KW-0028">Amino-acid biosynthesis</keyword>
<keyword id="KW-0963">Cytoplasm</keyword>
<keyword id="KW-0456">Lyase</keyword>
<keyword id="KW-0479">Metal-binding</keyword>
<keyword id="KW-0486">Methionine biosynthesis</keyword>
<keyword id="KW-1185">Reference proteome</keyword>
<keyword id="KW-0862">Zinc</keyword>
<gene>
    <name type="ORF">CG11134</name>
</gene>
<accession>Q9VY93</accession>
<proteinExistence type="evidence at transcript level"/>
<reference key="1">
    <citation type="journal article" date="2000" name="Science">
        <title>The genome sequence of Drosophila melanogaster.</title>
        <authorList>
            <person name="Adams M.D."/>
            <person name="Celniker S.E."/>
            <person name="Holt R.A."/>
            <person name="Evans C.A."/>
            <person name="Gocayne J.D."/>
            <person name="Amanatides P.G."/>
            <person name="Scherer S.E."/>
            <person name="Li P.W."/>
            <person name="Hoskins R.A."/>
            <person name="Galle R.F."/>
            <person name="George R.A."/>
            <person name="Lewis S.E."/>
            <person name="Richards S."/>
            <person name="Ashburner M."/>
            <person name="Henderson S.N."/>
            <person name="Sutton G.G."/>
            <person name="Wortman J.R."/>
            <person name="Yandell M.D."/>
            <person name="Zhang Q."/>
            <person name="Chen L.X."/>
            <person name="Brandon R.C."/>
            <person name="Rogers Y.-H.C."/>
            <person name="Blazej R.G."/>
            <person name="Champe M."/>
            <person name="Pfeiffer B.D."/>
            <person name="Wan K.H."/>
            <person name="Doyle C."/>
            <person name="Baxter E.G."/>
            <person name="Helt G."/>
            <person name="Nelson C.R."/>
            <person name="Miklos G.L.G."/>
            <person name="Abril J.F."/>
            <person name="Agbayani A."/>
            <person name="An H.-J."/>
            <person name="Andrews-Pfannkoch C."/>
            <person name="Baldwin D."/>
            <person name="Ballew R.M."/>
            <person name="Basu A."/>
            <person name="Baxendale J."/>
            <person name="Bayraktaroglu L."/>
            <person name="Beasley E.M."/>
            <person name="Beeson K.Y."/>
            <person name="Benos P.V."/>
            <person name="Berman B.P."/>
            <person name="Bhandari D."/>
            <person name="Bolshakov S."/>
            <person name="Borkova D."/>
            <person name="Botchan M.R."/>
            <person name="Bouck J."/>
            <person name="Brokstein P."/>
            <person name="Brottier P."/>
            <person name="Burtis K.C."/>
            <person name="Busam D.A."/>
            <person name="Butler H."/>
            <person name="Cadieu E."/>
            <person name="Center A."/>
            <person name="Chandra I."/>
            <person name="Cherry J.M."/>
            <person name="Cawley S."/>
            <person name="Dahlke C."/>
            <person name="Davenport L.B."/>
            <person name="Davies P."/>
            <person name="de Pablos B."/>
            <person name="Delcher A."/>
            <person name="Deng Z."/>
            <person name="Mays A.D."/>
            <person name="Dew I."/>
            <person name="Dietz S.M."/>
            <person name="Dodson K."/>
            <person name="Doup L.E."/>
            <person name="Downes M."/>
            <person name="Dugan-Rocha S."/>
            <person name="Dunkov B.C."/>
            <person name="Dunn P."/>
            <person name="Durbin K.J."/>
            <person name="Evangelista C.C."/>
            <person name="Ferraz C."/>
            <person name="Ferriera S."/>
            <person name="Fleischmann W."/>
            <person name="Fosler C."/>
            <person name="Gabrielian A.E."/>
            <person name="Garg N.S."/>
            <person name="Gelbart W.M."/>
            <person name="Glasser K."/>
            <person name="Glodek A."/>
            <person name="Gong F."/>
            <person name="Gorrell J.H."/>
            <person name="Gu Z."/>
            <person name="Guan P."/>
            <person name="Harris M."/>
            <person name="Harris N.L."/>
            <person name="Harvey D.A."/>
            <person name="Heiman T.J."/>
            <person name="Hernandez J.R."/>
            <person name="Houck J."/>
            <person name="Hostin D."/>
            <person name="Houston K.A."/>
            <person name="Howland T.J."/>
            <person name="Wei M.-H."/>
            <person name="Ibegwam C."/>
            <person name="Jalali M."/>
            <person name="Kalush F."/>
            <person name="Karpen G.H."/>
            <person name="Ke Z."/>
            <person name="Kennison J.A."/>
            <person name="Ketchum K.A."/>
            <person name="Kimmel B.E."/>
            <person name="Kodira C.D."/>
            <person name="Kraft C.L."/>
            <person name="Kravitz S."/>
            <person name="Kulp D."/>
            <person name="Lai Z."/>
            <person name="Lasko P."/>
            <person name="Lei Y."/>
            <person name="Levitsky A.A."/>
            <person name="Li J.H."/>
            <person name="Li Z."/>
            <person name="Liang Y."/>
            <person name="Lin X."/>
            <person name="Liu X."/>
            <person name="Mattei B."/>
            <person name="McIntosh T.C."/>
            <person name="McLeod M.P."/>
            <person name="McPherson D."/>
            <person name="Merkulov G."/>
            <person name="Milshina N.V."/>
            <person name="Mobarry C."/>
            <person name="Morris J."/>
            <person name="Moshrefi A."/>
            <person name="Mount S.M."/>
            <person name="Moy M."/>
            <person name="Murphy B."/>
            <person name="Murphy L."/>
            <person name="Muzny D.M."/>
            <person name="Nelson D.L."/>
            <person name="Nelson D.R."/>
            <person name="Nelson K.A."/>
            <person name="Nixon K."/>
            <person name="Nusskern D.R."/>
            <person name="Pacleb J.M."/>
            <person name="Palazzolo M."/>
            <person name="Pittman G.S."/>
            <person name="Pan S."/>
            <person name="Pollard J."/>
            <person name="Puri V."/>
            <person name="Reese M.G."/>
            <person name="Reinert K."/>
            <person name="Remington K."/>
            <person name="Saunders R.D.C."/>
            <person name="Scheeler F."/>
            <person name="Shen H."/>
            <person name="Shue B.C."/>
            <person name="Siden-Kiamos I."/>
            <person name="Simpson M."/>
            <person name="Skupski M.P."/>
            <person name="Smith T.J."/>
            <person name="Spier E."/>
            <person name="Spradling A.C."/>
            <person name="Stapleton M."/>
            <person name="Strong R."/>
            <person name="Sun E."/>
            <person name="Svirskas R."/>
            <person name="Tector C."/>
            <person name="Turner R."/>
            <person name="Venter E."/>
            <person name="Wang A.H."/>
            <person name="Wang X."/>
            <person name="Wang Z.-Y."/>
            <person name="Wassarman D.A."/>
            <person name="Weinstock G.M."/>
            <person name="Weissenbach J."/>
            <person name="Williams S.M."/>
            <person name="Woodage T."/>
            <person name="Worley K.C."/>
            <person name="Wu D."/>
            <person name="Yang S."/>
            <person name="Yao Q.A."/>
            <person name="Ye J."/>
            <person name="Yeh R.-F."/>
            <person name="Zaveri J.S."/>
            <person name="Zhan M."/>
            <person name="Zhang G."/>
            <person name="Zhao Q."/>
            <person name="Zheng L."/>
            <person name="Zheng X.H."/>
            <person name="Zhong F.N."/>
            <person name="Zhong W."/>
            <person name="Zhou X."/>
            <person name="Zhu S.C."/>
            <person name="Zhu X."/>
            <person name="Smith H.O."/>
            <person name="Gibbs R.A."/>
            <person name="Myers E.W."/>
            <person name="Rubin G.M."/>
            <person name="Venter J.C."/>
        </authorList>
    </citation>
    <scope>NUCLEOTIDE SEQUENCE [LARGE SCALE GENOMIC DNA]</scope>
    <source>
        <strain>Berkeley</strain>
    </source>
</reference>
<reference key="2">
    <citation type="journal article" date="2002" name="Genome Biol.">
        <title>Annotation of the Drosophila melanogaster euchromatic genome: a systematic review.</title>
        <authorList>
            <person name="Misra S."/>
            <person name="Crosby M.A."/>
            <person name="Mungall C.J."/>
            <person name="Matthews B.B."/>
            <person name="Campbell K.S."/>
            <person name="Hradecky P."/>
            <person name="Huang Y."/>
            <person name="Kaminker J.S."/>
            <person name="Millburn G.H."/>
            <person name="Prochnik S.E."/>
            <person name="Smith C.D."/>
            <person name="Tupy J.L."/>
            <person name="Whitfield E.J."/>
            <person name="Bayraktaroglu L."/>
            <person name="Berman B.P."/>
            <person name="Bettencourt B.R."/>
            <person name="Celniker S.E."/>
            <person name="de Grey A.D.N.J."/>
            <person name="Drysdale R.A."/>
            <person name="Harris N.L."/>
            <person name="Richter J."/>
            <person name="Russo S."/>
            <person name="Schroeder A.J."/>
            <person name="Shu S.Q."/>
            <person name="Stapleton M."/>
            <person name="Yamada C."/>
            <person name="Ashburner M."/>
            <person name="Gelbart W.M."/>
            <person name="Rubin G.M."/>
            <person name="Lewis S.E."/>
        </authorList>
    </citation>
    <scope>GENOME REANNOTATION</scope>
    <source>
        <strain>Berkeley</strain>
    </source>
</reference>
<reference key="3">
    <citation type="journal article" date="2002" name="Genome Biol.">
        <title>A Drosophila full-length cDNA resource.</title>
        <authorList>
            <person name="Stapleton M."/>
            <person name="Carlson J.W."/>
            <person name="Brokstein P."/>
            <person name="Yu C."/>
            <person name="Champe M."/>
            <person name="George R.A."/>
            <person name="Guarin H."/>
            <person name="Kronmiller B."/>
            <person name="Pacleb J.M."/>
            <person name="Park S."/>
            <person name="Wan K.H."/>
            <person name="Rubin G.M."/>
            <person name="Celniker S.E."/>
        </authorList>
    </citation>
    <scope>NUCLEOTIDE SEQUENCE [LARGE SCALE MRNA]</scope>
    <source>
        <strain>Berkeley</strain>
        <tissue>Embryo</tissue>
    </source>
</reference>
<comment type="function">
    <text evidence="1">Catalyzes the dehydration of methylthioribulose-1-phosphate (MTRu-1-P) into 2,3-diketo-5-methylthiopentyl-1-phosphate (DK-MTP-1-P).</text>
</comment>
<comment type="catalytic activity">
    <reaction evidence="1">
        <text>5-(methylsulfanyl)-D-ribulose 1-phosphate = 5-methylsulfanyl-2,3-dioxopentyl phosphate + H2O</text>
        <dbReference type="Rhea" id="RHEA:15549"/>
        <dbReference type="ChEBI" id="CHEBI:15377"/>
        <dbReference type="ChEBI" id="CHEBI:58548"/>
        <dbReference type="ChEBI" id="CHEBI:58828"/>
        <dbReference type="EC" id="4.2.1.109"/>
    </reaction>
</comment>
<comment type="cofactor">
    <cofactor evidence="1">
        <name>Zn(2+)</name>
        <dbReference type="ChEBI" id="CHEBI:29105"/>
    </cofactor>
    <text evidence="1">Binds 1 zinc ion per subunit.</text>
</comment>
<comment type="pathway">
    <text evidence="1">Amino-acid biosynthesis; L-methionine biosynthesis via salvage pathway; L-methionine from S-methyl-5-thio-alpha-D-ribose 1-phosphate: step 2/6.</text>
</comment>
<comment type="subcellular location">
    <subcellularLocation>
        <location evidence="1">Cytoplasm</location>
    </subcellularLocation>
</comment>
<comment type="similarity">
    <text evidence="1">Belongs to the aldolase class II family. MtnB subfamily.</text>
</comment>
<feature type="chain" id="PRO_0000393783" description="Probable methylthioribulose-1-phosphate dehydratase">
    <location>
        <begin position="1"/>
        <end position="227"/>
    </location>
</feature>
<feature type="active site" description="Proton donor/acceptor" evidence="1">
    <location>
        <position position="129"/>
    </location>
</feature>
<feature type="binding site" evidence="1">
    <location>
        <position position="87"/>
    </location>
    <ligand>
        <name>substrate</name>
    </ligand>
</feature>
<feature type="binding site" evidence="1">
    <location>
        <position position="105"/>
    </location>
    <ligand>
        <name>Zn(2+)</name>
        <dbReference type="ChEBI" id="CHEBI:29105"/>
    </ligand>
</feature>
<feature type="binding site" evidence="1">
    <location>
        <position position="107"/>
    </location>
    <ligand>
        <name>Zn(2+)</name>
        <dbReference type="ChEBI" id="CHEBI:29105"/>
    </ligand>
</feature>
<feature type="binding site" evidence="1">
    <location>
        <position position="185"/>
    </location>
    <ligand>
        <name>Zn(2+)</name>
        <dbReference type="ChEBI" id="CHEBI:29105"/>
    </ligand>
</feature>